<dbReference type="EMBL" id="AE014184">
    <property type="protein sequence ID" value="AAO44772.1"/>
    <property type="molecule type" value="Genomic_DNA"/>
</dbReference>
<dbReference type="RefSeq" id="WP_011102725.1">
    <property type="nucleotide sequence ID" value="NC_004572.3"/>
</dbReference>
<dbReference type="SMR" id="Q83FP1"/>
<dbReference type="STRING" id="203267.TWT_675"/>
<dbReference type="KEGG" id="twh:TWT_675"/>
<dbReference type="eggNOG" id="COG0480">
    <property type="taxonomic scope" value="Bacteria"/>
</dbReference>
<dbReference type="HOGENOM" id="CLU_002794_4_1_11"/>
<dbReference type="OrthoDB" id="9801472at2"/>
<dbReference type="Proteomes" id="UP000002200">
    <property type="component" value="Chromosome"/>
</dbReference>
<dbReference type="GO" id="GO:0005737">
    <property type="term" value="C:cytoplasm"/>
    <property type="evidence" value="ECO:0007669"/>
    <property type="project" value="UniProtKB-SubCell"/>
</dbReference>
<dbReference type="GO" id="GO:0005525">
    <property type="term" value="F:GTP binding"/>
    <property type="evidence" value="ECO:0007669"/>
    <property type="project" value="UniProtKB-UniRule"/>
</dbReference>
<dbReference type="GO" id="GO:0003924">
    <property type="term" value="F:GTPase activity"/>
    <property type="evidence" value="ECO:0007669"/>
    <property type="project" value="InterPro"/>
</dbReference>
<dbReference type="GO" id="GO:0003746">
    <property type="term" value="F:translation elongation factor activity"/>
    <property type="evidence" value="ECO:0007669"/>
    <property type="project" value="UniProtKB-UniRule"/>
</dbReference>
<dbReference type="GO" id="GO:0032790">
    <property type="term" value="P:ribosome disassembly"/>
    <property type="evidence" value="ECO:0007669"/>
    <property type="project" value="TreeGrafter"/>
</dbReference>
<dbReference type="CDD" id="cd01886">
    <property type="entry name" value="EF-G"/>
    <property type="match status" value="1"/>
</dbReference>
<dbReference type="CDD" id="cd16262">
    <property type="entry name" value="EFG_III"/>
    <property type="match status" value="1"/>
</dbReference>
<dbReference type="CDD" id="cd01434">
    <property type="entry name" value="EFG_mtEFG1_IV"/>
    <property type="match status" value="1"/>
</dbReference>
<dbReference type="CDD" id="cd03713">
    <property type="entry name" value="EFG_mtEFG_C"/>
    <property type="match status" value="1"/>
</dbReference>
<dbReference type="CDD" id="cd04088">
    <property type="entry name" value="EFG_mtEFG_II"/>
    <property type="match status" value="1"/>
</dbReference>
<dbReference type="FunFam" id="2.40.30.10:FF:000006">
    <property type="entry name" value="Elongation factor G"/>
    <property type="match status" value="1"/>
</dbReference>
<dbReference type="FunFam" id="3.30.230.10:FF:000003">
    <property type="entry name" value="Elongation factor G"/>
    <property type="match status" value="1"/>
</dbReference>
<dbReference type="FunFam" id="3.30.70.240:FF:000001">
    <property type="entry name" value="Elongation factor G"/>
    <property type="match status" value="1"/>
</dbReference>
<dbReference type="FunFam" id="3.30.70.870:FF:000001">
    <property type="entry name" value="Elongation factor G"/>
    <property type="match status" value="1"/>
</dbReference>
<dbReference type="FunFam" id="3.40.50.300:FF:000029">
    <property type="entry name" value="Elongation factor G"/>
    <property type="match status" value="1"/>
</dbReference>
<dbReference type="Gene3D" id="3.30.230.10">
    <property type="match status" value="1"/>
</dbReference>
<dbReference type="Gene3D" id="3.30.70.240">
    <property type="match status" value="1"/>
</dbReference>
<dbReference type="Gene3D" id="3.30.70.870">
    <property type="entry name" value="Elongation Factor G (Translational Gtpase), domain 3"/>
    <property type="match status" value="1"/>
</dbReference>
<dbReference type="Gene3D" id="3.40.50.300">
    <property type="entry name" value="P-loop containing nucleotide triphosphate hydrolases"/>
    <property type="match status" value="1"/>
</dbReference>
<dbReference type="Gene3D" id="2.40.30.10">
    <property type="entry name" value="Translation factors"/>
    <property type="match status" value="1"/>
</dbReference>
<dbReference type="HAMAP" id="MF_00054_B">
    <property type="entry name" value="EF_G_EF_2_B"/>
    <property type="match status" value="1"/>
</dbReference>
<dbReference type="InterPro" id="IPR053905">
    <property type="entry name" value="EF-G-like_DII"/>
</dbReference>
<dbReference type="InterPro" id="IPR041095">
    <property type="entry name" value="EFG_II"/>
</dbReference>
<dbReference type="InterPro" id="IPR009022">
    <property type="entry name" value="EFG_III"/>
</dbReference>
<dbReference type="InterPro" id="IPR035647">
    <property type="entry name" value="EFG_III/V"/>
</dbReference>
<dbReference type="InterPro" id="IPR047872">
    <property type="entry name" value="EFG_IV"/>
</dbReference>
<dbReference type="InterPro" id="IPR035649">
    <property type="entry name" value="EFG_V"/>
</dbReference>
<dbReference type="InterPro" id="IPR000640">
    <property type="entry name" value="EFG_V-like"/>
</dbReference>
<dbReference type="InterPro" id="IPR031157">
    <property type="entry name" value="G_TR_CS"/>
</dbReference>
<dbReference type="InterPro" id="IPR027417">
    <property type="entry name" value="P-loop_NTPase"/>
</dbReference>
<dbReference type="InterPro" id="IPR020568">
    <property type="entry name" value="Ribosomal_Su5_D2-typ_SF"/>
</dbReference>
<dbReference type="InterPro" id="IPR014721">
    <property type="entry name" value="Ribsml_uS5_D2-typ_fold_subgr"/>
</dbReference>
<dbReference type="InterPro" id="IPR005225">
    <property type="entry name" value="Small_GTP-bd"/>
</dbReference>
<dbReference type="InterPro" id="IPR000795">
    <property type="entry name" value="T_Tr_GTP-bd_dom"/>
</dbReference>
<dbReference type="InterPro" id="IPR009000">
    <property type="entry name" value="Transl_B-barrel_sf"/>
</dbReference>
<dbReference type="InterPro" id="IPR004540">
    <property type="entry name" value="Transl_elong_EFG/EF2"/>
</dbReference>
<dbReference type="InterPro" id="IPR005517">
    <property type="entry name" value="Transl_elong_EFG/EF2_IV"/>
</dbReference>
<dbReference type="NCBIfam" id="TIGR00484">
    <property type="entry name" value="EF-G"/>
    <property type="match status" value="1"/>
</dbReference>
<dbReference type="NCBIfam" id="NF009381">
    <property type="entry name" value="PRK12740.1-5"/>
    <property type="match status" value="1"/>
</dbReference>
<dbReference type="NCBIfam" id="TIGR00231">
    <property type="entry name" value="small_GTP"/>
    <property type="match status" value="1"/>
</dbReference>
<dbReference type="PANTHER" id="PTHR43261:SF1">
    <property type="entry name" value="RIBOSOME-RELEASING FACTOR 2, MITOCHONDRIAL"/>
    <property type="match status" value="1"/>
</dbReference>
<dbReference type="PANTHER" id="PTHR43261">
    <property type="entry name" value="TRANSLATION ELONGATION FACTOR G-RELATED"/>
    <property type="match status" value="1"/>
</dbReference>
<dbReference type="Pfam" id="PF22042">
    <property type="entry name" value="EF-G_D2"/>
    <property type="match status" value="1"/>
</dbReference>
<dbReference type="Pfam" id="PF00679">
    <property type="entry name" value="EFG_C"/>
    <property type="match status" value="1"/>
</dbReference>
<dbReference type="Pfam" id="PF14492">
    <property type="entry name" value="EFG_III"/>
    <property type="match status" value="1"/>
</dbReference>
<dbReference type="Pfam" id="PF03764">
    <property type="entry name" value="EFG_IV"/>
    <property type="match status" value="1"/>
</dbReference>
<dbReference type="Pfam" id="PF00009">
    <property type="entry name" value="GTP_EFTU"/>
    <property type="match status" value="1"/>
</dbReference>
<dbReference type="PRINTS" id="PR00315">
    <property type="entry name" value="ELONGATNFCT"/>
</dbReference>
<dbReference type="SMART" id="SM00838">
    <property type="entry name" value="EFG_C"/>
    <property type="match status" value="1"/>
</dbReference>
<dbReference type="SMART" id="SM00889">
    <property type="entry name" value="EFG_IV"/>
    <property type="match status" value="1"/>
</dbReference>
<dbReference type="SUPFAM" id="SSF54980">
    <property type="entry name" value="EF-G C-terminal domain-like"/>
    <property type="match status" value="2"/>
</dbReference>
<dbReference type="SUPFAM" id="SSF52540">
    <property type="entry name" value="P-loop containing nucleoside triphosphate hydrolases"/>
    <property type="match status" value="1"/>
</dbReference>
<dbReference type="SUPFAM" id="SSF54211">
    <property type="entry name" value="Ribosomal protein S5 domain 2-like"/>
    <property type="match status" value="1"/>
</dbReference>
<dbReference type="SUPFAM" id="SSF50447">
    <property type="entry name" value="Translation proteins"/>
    <property type="match status" value="1"/>
</dbReference>
<dbReference type="PROSITE" id="PS00301">
    <property type="entry name" value="G_TR_1"/>
    <property type="match status" value="1"/>
</dbReference>
<dbReference type="PROSITE" id="PS51722">
    <property type="entry name" value="G_TR_2"/>
    <property type="match status" value="1"/>
</dbReference>
<accession>Q83FP1</accession>
<keyword id="KW-0963">Cytoplasm</keyword>
<keyword id="KW-0251">Elongation factor</keyword>
<keyword id="KW-0342">GTP-binding</keyword>
<keyword id="KW-0547">Nucleotide-binding</keyword>
<keyword id="KW-0648">Protein biosynthesis</keyword>
<keyword id="KW-1185">Reference proteome</keyword>
<gene>
    <name evidence="1" type="primary">fusA</name>
    <name type="ordered locus">TWT_675</name>
</gene>
<name>EFG_TROWT</name>
<proteinExistence type="inferred from homology"/>
<organism>
    <name type="scientific">Tropheryma whipplei (strain Twist)</name>
    <name type="common">Whipple's bacillus</name>
    <dbReference type="NCBI Taxonomy" id="203267"/>
    <lineage>
        <taxon>Bacteria</taxon>
        <taxon>Bacillati</taxon>
        <taxon>Actinomycetota</taxon>
        <taxon>Actinomycetes</taxon>
        <taxon>Micrococcales</taxon>
        <taxon>Tropherymataceae</taxon>
        <taxon>Tropheryma</taxon>
    </lineage>
</organism>
<reference key="1">
    <citation type="journal article" date="2003" name="Genome Res.">
        <title>Tropheryma whipplei twist: a human pathogenic Actinobacteria with a reduced genome.</title>
        <authorList>
            <person name="Raoult D."/>
            <person name="Ogata H."/>
            <person name="Audic S."/>
            <person name="Robert C."/>
            <person name="Suhre K."/>
            <person name="Drancourt M."/>
            <person name="Claverie J.-M."/>
        </authorList>
    </citation>
    <scope>NUCLEOTIDE SEQUENCE [LARGE SCALE GENOMIC DNA]</scope>
    <source>
        <strain>Twist</strain>
    </source>
</reference>
<protein>
    <recommendedName>
        <fullName evidence="1">Elongation factor G</fullName>
        <shortName evidence="1">EF-G</shortName>
    </recommendedName>
</protein>
<evidence type="ECO:0000255" key="1">
    <source>
        <dbReference type="HAMAP-Rule" id="MF_00054"/>
    </source>
</evidence>
<sequence length="701" mass="77311">MSQEVLEDLAKVRNIGIMAHIDAGKTTTTERILFYTGITHKIGEVHDGAAAMDWMAQEQERGITITSAATTCFWGGNQINIIDTPGHVDFTVEVERSLRVLDGAVAVFDGKEGVEPQSETVWRQADKYKVPRICFVNKMDKIGADFHFTVKTVVDRLGATPLVIQLPIGSESTFEGVIDLVEMRALTWRGDAKGDVKMGAEYAVEPIPEDLKQQADEFRQKLIETVAENDEALLEKFFSGEEITVAELKSAIRRLTVSGSLYPILCGSSFKNRGVQPMLDAVVDYLPSPLDVPPVTGVDADNPQERLADVSQPFSALAFKVAVHPFFGRLTYIRVYSGTLPAGSQIVNSTKSRKERFGKVFQMHSNKENPVPKMSAGHIYAVIGLKYTTTGDTLCDQDNPIILESMTFPDPVIEVAIEPKTKADQEKLSLAIQRLAEEDPTFKTEQNPETGQTVIKGMGELHLDILVDRMRREFNVEANVGTPQVAYRETIRRTVEKHEYTHKKQTGGAGQFARVIITLEPLEVTGEKTYDFVDTVTGGRIPKEYIPSVDAGIRDAMQVGVLAGYPTVGIKATLVDGAYHDVDSSEMAFRIAGSQAFKEASRRADPTLLEPIMSVEVRTPDEYMGDVIGDLNSRRGHIQSMQDSSGIKVIQARVPLSEMFGYIGDLRSKTSGRAVYSMTFDGYAEAPKSVTEEVVRKARGE</sequence>
<comment type="function">
    <text evidence="1">Catalyzes the GTP-dependent ribosomal translocation step during translation elongation. During this step, the ribosome changes from the pre-translocational (PRE) to the post-translocational (POST) state as the newly formed A-site-bound peptidyl-tRNA and P-site-bound deacylated tRNA move to the P and E sites, respectively. Catalyzes the coordinated movement of the two tRNA molecules, the mRNA and conformational changes in the ribosome.</text>
</comment>
<comment type="subcellular location">
    <subcellularLocation>
        <location evidence="1">Cytoplasm</location>
    </subcellularLocation>
</comment>
<comment type="similarity">
    <text evidence="1">Belongs to the TRAFAC class translation factor GTPase superfamily. Classic translation factor GTPase family. EF-G/EF-2 subfamily.</text>
</comment>
<feature type="chain" id="PRO_0000091257" description="Elongation factor G">
    <location>
        <begin position="1"/>
        <end position="701"/>
    </location>
</feature>
<feature type="domain" description="tr-type G">
    <location>
        <begin position="10"/>
        <end position="290"/>
    </location>
</feature>
<feature type="binding site" evidence="1">
    <location>
        <begin position="19"/>
        <end position="26"/>
    </location>
    <ligand>
        <name>GTP</name>
        <dbReference type="ChEBI" id="CHEBI:37565"/>
    </ligand>
</feature>
<feature type="binding site" evidence="1">
    <location>
        <begin position="83"/>
        <end position="87"/>
    </location>
    <ligand>
        <name>GTP</name>
        <dbReference type="ChEBI" id="CHEBI:37565"/>
    </ligand>
</feature>
<feature type="binding site" evidence="1">
    <location>
        <begin position="137"/>
        <end position="140"/>
    </location>
    <ligand>
        <name>GTP</name>
        <dbReference type="ChEBI" id="CHEBI:37565"/>
    </ligand>
</feature>